<reference key="1">
    <citation type="journal article" date="2006" name="J. Bacteriol.">
        <title>Genome sequence of Aeromonas hydrophila ATCC 7966T: jack of all trades.</title>
        <authorList>
            <person name="Seshadri R."/>
            <person name="Joseph S.W."/>
            <person name="Chopra A.K."/>
            <person name="Sha J."/>
            <person name="Shaw J."/>
            <person name="Graf J."/>
            <person name="Haft D.H."/>
            <person name="Wu M."/>
            <person name="Ren Q."/>
            <person name="Rosovitz M.J."/>
            <person name="Madupu R."/>
            <person name="Tallon L."/>
            <person name="Kim M."/>
            <person name="Jin S."/>
            <person name="Vuong H."/>
            <person name="Stine O.C."/>
            <person name="Ali A."/>
            <person name="Horneman A.J."/>
            <person name="Heidelberg J.F."/>
        </authorList>
    </citation>
    <scope>NUCLEOTIDE SEQUENCE [LARGE SCALE GENOMIC DNA]</scope>
    <source>
        <strain>ATCC 7966 / DSM 30187 / BCRC 13018 / CCUG 14551 / JCM 1027 / KCTC 2358 / NCIMB 9240 / NCTC 8049</strain>
    </source>
</reference>
<dbReference type="EMBL" id="CP000462">
    <property type="protein sequence ID" value="ABK37912.1"/>
    <property type="molecule type" value="Genomic_DNA"/>
</dbReference>
<dbReference type="RefSeq" id="WP_011705637.1">
    <property type="nucleotide sequence ID" value="NC_008570.1"/>
</dbReference>
<dbReference type="RefSeq" id="YP_856286.1">
    <property type="nucleotide sequence ID" value="NC_008570.1"/>
</dbReference>
<dbReference type="SMR" id="A0KJ35"/>
<dbReference type="STRING" id="380703.AHA_1750"/>
<dbReference type="EnsemblBacteria" id="ABK37912">
    <property type="protein sequence ID" value="ABK37912"/>
    <property type="gene ID" value="AHA_1750"/>
</dbReference>
<dbReference type="GeneID" id="4490280"/>
<dbReference type="KEGG" id="aha:AHA_1750"/>
<dbReference type="PATRIC" id="fig|380703.7.peg.1764"/>
<dbReference type="eggNOG" id="COG1076">
    <property type="taxonomic scope" value="Bacteria"/>
</dbReference>
<dbReference type="HOGENOM" id="CLU_068529_2_0_6"/>
<dbReference type="OrthoDB" id="287587at2"/>
<dbReference type="Proteomes" id="UP000000756">
    <property type="component" value="Chromosome"/>
</dbReference>
<dbReference type="GO" id="GO:1990230">
    <property type="term" value="C:iron-sulfur cluster transfer complex"/>
    <property type="evidence" value="ECO:0007669"/>
    <property type="project" value="TreeGrafter"/>
</dbReference>
<dbReference type="GO" id="GO:0001671">
    <property type="term" value="F:ATPase activator activity"/>
    <property type="evidence" value="ECO:0007669"/>
    <property type="project" value="InterPro"/>
</dbReference>
<dbReference type="GO" id="GO:0051087">
    <property type="term" value="F:protein-folding chaperone binding"/>
    <property type="evidence" value="ECO:0007669"/>
    <property type="project" value="InterPro"/>
</dbReference>
<dbReference type="GO" id="GO:0044571">
    <property type="term" value="P:[2Fe-2S] cluster assembly"/>
    <property type="evidence" value="ECO:0007669"/>
    <property type="project" value="InterPro"/>
</dbReference>
<dbReference type="GO" id="GO:0051259">
    <property type="term" value="P:protein complex oligomerization"/>
    <property type="evidence" value="ECO:0007669"/>
    <property type="project" value="InterPro"/>
</dbReference>
<dbReference type="GO" id="GO:0006457">
    <property type="term" value="P:protein folding"/>
    <property type="evidence" value="ECO:0007669"/>
    <property type="project" value="UniProtKB-UniRule"/>
</dbReference>
<dbReference type="CDD" id="cd06257">
    <property type="entry name" value="DnaJ"/>
    <property type="match status" value="1"/>
</dbReference>
<dbReference type="Gene3D" id="1.10.287.110">
    <property type="entry name" value="DnaJ domain"/>
    <property type="match status" value="1"/>
</dbReference>
<dbReference type="Gene3D" id="1.20.1280.20">
    <property type="entry name" value="HscB, C-terminal domain"/>
    <property type="match status" value="1"/>
</dbReference>
<dbReference type="HAMAP" id="MF_00682">
    <property type="entry name" value="HscB"/>
    <property type="match status" value="1"/>
</dbReference>
<dbReference type="InterPro" id="IPR001623">
    <property type="entry name" value="DnaJ_domain"/>
</dbReference>
<dbReference type="InterPro" id="IPR004640">
    <property type="entry name" value="HscB"/>
</dbReference>
<dbReference type="InterPro" id="IPR036386">
    <property type="entry name" value="HscB_C_sf"/>
</dbReference>
<dbReference type="InterPro" id="IPR009073">
    <property type="entry name" value="HscB_oligo_C"/>
</dbReference>
<dbReference type="InterPro" id="IPR036869">
    <property type="entry name" value="J_dom_sf"/>
</dbReference>
<dbReference type="NCBIfam" id="TIGR00714">
    <property type="entry name" value="hscB"/>
    <property type="match status" value="1"/>
</dbReference>
<dbReference type="NCBIfam" id="NF003449">
    <property type="entry name" value="PRK05014.1"/>
    <property type="match status" value="1"/>
</dbReference>
<dbReference type="PANTHER" id="PTHR14021">
    <property type="entry name" value="IRON-SULFUR CLUSTER CO-CHAPERONE PROTEIN HSCB"/>
    <property type="match status" value="1"/>
</dbReference>
<dbReference type="PANTHER" id="PTHR14021:SF15">
    <property type="entry name" value="IRON-SULFUR CLUSTER CO-CHAPERONE PROTEIN HSCB"/>
    <property type="match status" value="1"/>
</dbReference>
<dbReference type="Pfam" id="PF07743">
    <property type="entry name" value="HSCB_C"/>
    <property type="match status" value="1"/>
</dbReference>
<dbReference type="SMART" id="SM00271">
    <property type="entry name" value="DnaJ"/>
    <property type="match status" value="1"/>
</dbReference>
<dbReference type="SUPFAM" id="SSF46565">
    <property type="entry name" value="Chaperone J-domain"/>
    <property type="match status" value="1"/>
</dbReference>
<dbReference type="SUPFAM" id="SSF47144">
    <property type="entry name" value="HSC20 (HSCB), C-terminal oligomerisation domain"/>
    <property type="match status" value="1"/>
</dbReference>
<dbReference type="PROSITE" id="PS50076">
    <property type="entry name" value="DNAJ_2"/>
    <property type="match status" value="1"/>
</dbReference>
<name>HSCB_AERHH</name>
<feature type="chain" id="PRO_1000082994" description="Co-chaperone protein HscB homolog">
    <location>
        <begin position="1"/>
        <end position="172"/>
    </location>
</feature>
<feature type="domain" description="J" evidence="1">
    <location>
        <begin position="2"/>
        <end position="74"/>
    </location>
</feature>
<comment type="function">
    <text evidence="1">Co-chaperone involved in the maturation of iron-sulfur cluster-containing proteins. Seems to help targeting proteins to be folded toward HscA.</text>
</comment>
<comment type="subunit">
    <text evidence="1">Interacts with HscA and stimulates its ATPase activity.</text>
</comment>
<comment type="similarity">
    <text evidence="1">Belongs to the HscB family.</text>
</comment>
<sequence length="172" mass="20234">MNYFELFGLVEGFELDTRQLAETYRQLQTQFHPDRFATAPEWEQLAAVQRAAQINDAFTTLKAPLRRAEYLLSLRGTELRGEQQTLQDTAFLMQQLEWRERLADLKGETDPERAIKDFRQEIRHDHQLLMQQLTQALATGEDPRAADCVRKLKFVDKLLEELERFEDSLFES</sequence>
<organism>
    <name type="scientific">Aeromonas hydrophila subsp. hydrophila (strain ATCC 7966 / DSM 30187 / BCRC 13018 / CCUG 14551 / JCM 1027 / KCTC 2358 / NCIMB 9240 / NCTC 8049)</name>
    <dbReference type="NCBI Taxonomy" id="380703"/>
    <lineage>
        <taxon>Bacteria</taxon>
        <taxon>Pseudomonadati</taxon>
        <taxon>Pseudomonadota</taxon>
        <taxon>Gammaproteobacteria</taxon>
        <taxon>Aeromonadales</taxon>
        <taxon>Aeromonadaceae</taxon>
        <taxon>Aeromonas</taxon>
    </lineage>
</organism>
<gene>
    <name evidence="1" type="primary">hscB</name>
    <name type="ordered locus">AHA_1750</name>
</gene>
<evidence type="ECO:0000255" key="1">
    <source>
        <dbReference type="HAMAP-Rule" id="MF_00682"/>
    </source>
</evidence>
<accession>A0KJ35</accession>
<keyword id="KW-0143">Chaperone</keyword>
<keyword id="KW-1185">Reference proteome</keyword>
<protein>
    <recommendedName>
        <fullName evidence="1">Co-chaperone protein HscB homolog</fullName>
    </recommendedName>
</protein>
<proteinExistence type="inferred from homology"/>